<comment type="function">
    <text evidence="3">Catalyzes the oxidation of either pyridoxine 5'-phosphate (PNP) or pyridoxamine 5'-phosphate (PMP) into pyridoxal 5'-phosphate (PLP).</text>
</comment>
<comment type="catalytic activity">
    <reaction evidence="3">
        <text>pyridoxamine 5'-phosphate + O2 + H2O = pyridoxal 5'-phosphate + H2O2 + NH4(+)</text>
        <dbReference type="Rhea" id="RHEA:15817"/>
        <dbReference type="ChEBI" id="CHEBI:15377"/>
        <dbReference type="ChEBI" id="CHEBI:15379"/>
        <dbReference type="ChEBI" id="CHEBI:16240"/>
        <dbReference type="ChEBI" id="CHEBI:28938"/>
        <dbReference type="ChEBI" id="CHEBI:58451"/>
        <dbReference type="ChEBI" id="CHEBI:597326"/>
        <dbReference type="EC" id="1.4.3.5"/>
    </reaction>
    <physiologicalReaction direction="left-to-right" evidence="9">
        <dbReference type="Rhea" id="RHEA:15818"/>
    </physiologicalReaction>
</comment>
<comment type="catalytic activity">
    <reaction evidence="3">
        <text>pyridoxine 5'-phosphate + O2 = pyridoxal 5'-phosphate + H2O2</text>
        <dbReference type="Rhea" id="RHEA:15149"/>
        <dbReference type="ChEBI" id="CHEBI:15379"/>
        <dbReference type="ChEBI" id="CHEBI:16240"/>
        <dbReference type="ChEBI" id="CHEBI:58589"/>
        <dbReference type="ChEBI" id="CHEBI:597326"/>
        <dbReference type="EC" id="1.4.3.5"/>
    </reaction>
    <physiologicalReaction direction="left-to-right" evidence="9">
        <dbReference type="Rhea" id="RHEA:15150"/>
    </physiologicalReaction>
</comment>
<comment type="cofactor">
    <cofactor evidence="2">
        <name>FMN</name>
        <dbReference type="ChEBI" id="CHEBI:58210"/>
    </cofactor>
    <text evidence="2">Binds 1 FMN per subunit.</text>
</comment>
<comment type="biophysicochemical properties">
    <kinetics>
        <KM evidence="3">1.15 uM for pyridoxamine 5'-phosphate (at pH 9.0 and 37 degrees Celsius)</KM>
        <KM evidence="3">0.65 uM for pyridoxine 5'-phosphate (at pH 9.0 and 37 degrees Celsius)</KM>
    </kinetics>
    <phDependence>
        <text evidence="3">Optimum pH is 9.0. Active between pH 7.0 and 10.5.</text>
    </phDependence>
</comment>
<comment type="pathway">
    <text evidence="9">Cofactor metabolism; pyridoxal 5'-phosphate salvage; pyridoxal 5'-phosphate from pyridoxamine 5'-phosphate: step 1/1.</text>
</comment>
<comment type="pathway">
    <text evidence="9">Cofactor metabolism; pyridoxal 5'-phosphate salvage; pyridoxal 5'-phosphate from pyridoxine 5'-phosphate: step 1/1.</text>
</comment>
<comment type="subunit">
    <text evidence="3">Homodimer.</text>
</comment>
<comment type="tissue specificity">
    <text evidence="4">Expressed in silk gland and fat body of the larva.</text>
</comment>
<comment type="developmental stage">
    <text evidence="3 4 5">Expressed in fifth instar larva (PubMed:19523068, PubMed:26780217, PubMed:27106120). In the silk gland, highest level on the first day of 5th instar larva, then displaying a decreasing trend daily. In the fat body, expression level is high in the early and late stages, and low in the middle stage of 5th instar larva (PubMed:26780217).</text>
</comment>
<comment type="induction">
    <text evidence="4">Expression is up-regulated by exogenous molting hormone (beta-ecdysterone) and down-regulated by exogenous juvenile hormone (JH) III in the silk gland and fat body of the fifth instar larva.</text>
</comment>
<comment type="disruption phenotype">
    <text evidence="5">RNAi-mediated knockdown of this protein causes significant decrease in transcription levels of pyridoxal 5'-phosphate (PLP)-dependent enzymes phosphoserine aminotransferase (PSAT) and aspartate aminotransferase (glutamic-oxaloacetic transaminase) in silk gland, fat body and midgut of the fifth instar larva.</text>
</comment>
<comment type="similarity">
    <text evidence="8">Belongs to the pyridoxamine 5'-phosphate oxidase family.</text>
</comment>
<organism evidence="10">
    <name type="scientific">Bombyx mori</name>
    <name type="common">Silk moth</name>
    <dbReference type="NCBI Taxonomy" id="7091"/>
    <lineage>
        <taxon>Eukaryota</taxon>
        <taxon>Metazoa</taxon>
        <taxon>Ecdysozoa</taxon>
        <taxon>Arthropoda</taxon>
        <taxon>Hexapoda</taxon>
        <taxon>Insecta</taxon>
        <taxon>Pterygota</taxon>
        <taxon>Neoptera</taxon>
        <taxon>Endopterygota</taxon>
        <taxon>Lepidoptera</taxon>
        <taxon>Glossata</taxon>
        <taxon>Ditrysia</taxon>
        <taxon>Bombycoidea</taxon>
        <taxon>Bombycidae</taxon>
        <taxon>Bombycinae</taxon>
        <taxon>Bombyx</taxon>
    </lineage>
</organism>
<protein>
    <recommendedName>
        <fullName evidence="8">Pyridoxine/pyridoxamine 5'-phosphate oxidase</fullName>
        <ecNumber evidence="3">1.4.3.5</ecNumber>
    </recommendedName>
    <alternativeName>
        <fullName evidence="7">BmPNPO</fullName>
    </alternativeName>
    <alternativeName>
        <fullName evidence="8">PNP/PMP oxidase</fullName>
        <shortName evidence="8">PNPOx</shortName>
    </alternativeName>
    <alternativeName>
        <fullName evidence="8">Pyridoxal 5'-phosphate synthase</fullName>
    </alternativeName>
</protein>
<dbReference type="EC" id="1.4.3.5" evidence="3"/>
<dbReference type="EMBL" id="DQ452398">
    <property type="protein sequence ID" value="ABE28379.1"/>
    <property type="molecule type" value="mRNA"/>
</dbReference>
<dbReference type="EMBL" id="BABH01013608">
    <property type="status" value="NOT_ANNOTATED_CDS"/>
    <property type="molecule type" value="Genomic_DNA"/>
</dbReference>
<dbReference type="RefSeq" id="NP_001037442.1">
    <property type="nucleotide sequence ID" value="NM_001043977.1"/>
</dbReference>
<dbReference type="SMR" id="Q1PCB0"/>
<dbReference type="FunCoup" id="Q1PCB0">
    <property type="interactions" value="886"/>
</dbReference>
<dbReference type="STRING" id="7091.Q1PCB0"/>
<dbReference type="PaxDb" id="7091-BGIBMGA005391-TA"/>
<dbReference type="EnsemblMetazoa" id="NM_001043977.1">
    <property type="protein sequence ID" value="NP_001037442.1"/>
    <property type="gene ID" value="GeneID_693010"/>
</dbReference>
<dbReference type="GeneID" id="693010"/>
<dbReference type="KEGG" id="bmor:693010"/>
<dbReference type="CTD" id="55163"/>
<dbReference type="eggNOG" id="KOG2586">
    <property type="taxonomic scope" value="Eukaryota"/>
</dbReference>
<dbReference type="HOGENOM" id="CLU_032263_2_1_1"/>
<dbReference type="InParanoid" id="Q1PCB0"/>
<dbReference type="OMA" id="AYFRTRP"/>
<dbReference type="OrthoDB" id="335086at7088"/>
<dbReference type="BRENDA" id="1.4.3.5">
    <property type="organism ID" value="890"/>
</dbReference>
<dbReference type="UniPathway" id="UPA01068">
    <property type="reaction ID" value="UER00304"/>
</dbReference>
<dbReference type="UniPathway" id="UPA01068">
    <property type="reaction ID" value="UER00305"/>
</dbReference>
<dbReference type="Proteomes" id="UP000005204">
    <property type="component" value="Unassembled WGS sequence"/>
</dbReference>
<dbReference type="GO" id="GO:0010181">
    <property type="term" value="F:FMN binding"/>
    <property type="evidence" value="ECO:0000250"/>
    <property type="project" value="UniProtKB"/>
</dbReference>
<dbReference type="GO" id="GO:0042803">
    <property type="term" value="F:protein homodimerization activity"/>
    <property type="evidence" value="ECO:0000353"/>
    <property type="project" value="UniProtKB"/>
</dbReference>
<dbReference type="GO" id="GO:0030170">
    <property type="term" value="F:pyridoxal phosphate binding"/>
    <property type="evidence" value="ECO:0000250"/>
    <property type="project" value="UniProtKB"/>
</dbReference>
<dbReference type="GO" id="GO:0004733">
    <property type="term" value="F:pyridoxamine phosphate oxidase activity"/>
    <property type="evidence" value="ECO:0000314"/>
    <property type="project" value="UniProtKB"/>
</dbReference>
<dbReference type="GO" id="GO:0002168">
    <property type="term" value="P:instar larval development"/>
    <property type="evidence" value="ECO:0000270"/>
    <property type="project" value="UniProtKB"/>
</dbReference>
<dbReference type="GO" id="GO:0042823">
    <property type="term" value="P:pyridoxal phosphate biosynthetic process"/>
    <property type="evidence" value="ECO:0000314"/>
    <property type="project" value="UniProtKB"/>
</dbReference>
<dbReference type="GO" id="GO:0008615">
    <property type="term" value="P:pyridoxine biosynthetic process"/>
    <property type="evidence" value="ECO:0007669"/>
    <property type="project" value="UniProtKB-KW"/>
</dbReference>
<dbReference type="GO" id="GO:0008614">
    <property type="term" value="P:pyridoxine metabolic process"/>
    <property type="evidence" value="ECO:0000314"/>
    <property type="project" value="UniProtKB"/>
</dbReference>
<dbReference type="GO" id="GO:0006357">
    <property type="term" value="P:regulation of transcription by RNA polymerase II"/>
    <property type="evidence" value="ECO:0000315"/>
    <property type="project" value="UniProtKB"/>
</dbReference>
<dbReference type="GO" id="GO:0009725">
    <property type="term" value="P:response to hormone"/>
    <property type="evidence" value="ECO:0000270"/>
    <property type="project" value="UniProtKB"/>
</dbReference>
<dbReference type="FunFam" id="2.30.110.10:FF:000005">
    <property type="entry name" value="NAD(P)H-hydrate epimerase"/>
    <property type="match status" value="1"/>
</dbReference>
<dbReference type="Gene3D" id="2.30.110.10">
    <property type="entry name" value="Electron Transport, Fmn-binding Protein, Chain A"/>
    <property type="match status" value="1"/>
</dbReference>
<dbReference type="HAMAP" id="MF_01629">
    <property type="entry name" value="PdxH"/>
    <property type="match status" value="1"/>
</dbReference>
<dbReference type="InterPro" id="IPR000659">
    <property type="entry name" value="Pyridox_Oxase"/>
</dbReference>
<dbReference type="InterPro" id="IPR019740">
    <property type="entry name" value="Pyridox_Oxase_CS"/>
</dbReference>
<dbReference type="InterPro" id="IPR011576">
    <property type="entry name" value="Pyridox_Oxase_N"/>
</dbReference>
<dbReference type="InterPro" id="IPR019576">
    <property type="entry name" value="Pyridoxamine_oxidase_dimer_C"/>
</dbReference>
<dbReference type="InterPro" id="IPR012349">
    <property type="entry name" value="Split_barrel_FMN-bd"/>
</dbReference>
<dbReference type="NCBIfam" id="TIGR00558">
    <property type="entry name" value="pdxH"/>
    <property type="match status" value="1"/>
</dbReference>
<dbReference type="NCBIfam" id="NF004231">
    <property type="entry name" value="PRK05679.1"/>
    <property type="match status" value="1"/>
</dbReference>
<dbReference type="PANTHER" id="PTHR10851:SF0">
    <property type="entry name" value="PYRIDOXINE-5'-PHOSPHATE OXIDASE"/>
    <property type="match status" value="1"/>
</dbReference>
<dbReference type="PANTHER" id="PTHR10851">
    <property type="entry name" value="PYRIDOXINE-5-PHOSPHATE OXIDASE"/>
    <property type="match status" value="1"/>
</dbReference>
<dbReference type="Pfam" id="PF10590">
    <property type="entry name" value="PNP_phzG_C"/>
    <property type="match status" value="1"/>
</dbReference>
<dbReference type="Pfam" id="PF01243">
    <property type="entry name" value="PNPOx_N"/>
    <property type="match status" value="1"/>
</dbReference>
<dbReference type="PIRSF" id="PIRSF000190">
    <property type="entry name" value="Pyd_amn-ph_oxd"/>
    <property type="match status" value="1"/>
</dbReference>
<dbReference type="SUPFAM" id="SSF50475">
    <property type="entry name" value="FMN-binding split barrel"/>
    <property type="match status" value="1"/>
</dbReference>
<dbReference type="PROSITE" id="PS01064">
    <property type="entry name" value="PYRIDOX_OXIDASE"/>
    <property type="match status" value="1"/>
</dbReference>
<feature type="chain" id="PRO_0000451715" description="Pyridoxine/pyridoxamine 5'-phosphate oxidase">
    <location>
        <begin position="1"/>
        <end position="257"/>
    </location>
</feature>
<feature type="binding site" evidence="1">
    <location>
        <begin position="33"/>
        <end position="36"/>
    </location>
    <ligand>
        <name>substrate</name>
    </ligand>
</feature>
<feature type="binding site" evidence="2">
    <location>
        <begin position="90"/>
        <end position="93"/>
    </location>
    <ligand>
        <name>FMN</name>
        <dbReference type="ChEBI" id="CHEBI:58210"/>
    </ligand>
</feature>
<feature type="binding site" evidence="2">
    <location>
        <position position="95"/>
    </location>
    <ligand>
        <name>pyridoxal 5'-phosphate</name>
        <dbReference type="ChEBI" id="CHEBI:597326"/>
    </ligand>
</feature>
<feature type="binding site" evidence="1">
    <location>
        <begin position="105"/>
        <end position="106"/>
    </location>
    <ligand>
        <name>FMN</name>
        <dbReference type="ChEBI" id="CHEBI:58210"/>
    </ligand>
</feature>
<feature type="binding site" evidence="1">
    <location>
        <position position="112"/>
    </location>
    <ligand>
        <name>FMN</name>
        <dbReference type="ChEBI" id="CHEBI:58210"/>
    </ligand>
</feature>
<feature type="binding site" evidence="2">
    <location>
        <position position="152"/>
    </location>
    <ligand>
        <name>pyridoxal 5'-phosphate</name>
        <dbReference type="ChEBI" id="CHEBI:597326"/>
    </ligand>
</feature>
<feature type="binding site" evidence="2">
    <location>
        <position position="156"/>
    </location>
    <ligand>
        <name>pyridoxal 5'-phosphate</name>
        <dbReference type="ChEBI" id="CHEBI:597326"/>
    </ligand>
</feature>
<feature type="binding site" evidence="2">
    <location>
        <position position="160"/>
    </location>
    <ligand>
        <name>pyridoxal 5'-phosphate</name>
        <dbReference type="ChEBI" id="CHEBI:597326"/>
    </ligand>
</feature>
<feature type="binding site" evidence="2">
    <location>
        <begin position="169"/>
        <end position="170"/>
    </location>
    <ligand>
        <name>FMN</name>
        <dbReference type="ChEBI" id="CHEBI:58210"/>
    </ligand>
</feature>
<feature type="binding site" evidence="1">
    <location>
        <position position="216"/>
    </location>
    <ligand>
        <name>FMN</name>
        <dbReference type="ChEBI" id="CHEBI:58210"/>
    </ligand>
</feature>
<feature type="binding site" evidence="1">
    <location>
        <begin position="222"/>
        <end position="224"/>
    </location>
    <ligand>
        <name>substrate</name>
    </ligand>
</feature>
<feature type="binding site" evidence="1">
    <location>
        <position position="226"/>
    </location>
    <ligand>
        <name>FMN</name>
        <dbReference type="ChEBI" id="CHEBI:58210"/>
    </ligand>
</feature>
<sequence length="257" mass="29865">MLNNCVVLIRKSVLLSPNLKYIRNMSIDIGGMRIKYKEKDETFLEKHLVSKEPFGQFKSWFEEACARKEILEPNAMCLATVSQEGFPSARFVLCKGYGKEGFKFYTNYGSKKAKDIEGNPNVAATFYWEILNRSVRIEGRVEKLSEDDSTKYFHTRPVVSQIAACASYQSTPIESRDVLCEREKLLEQQYMIPGKEVPKPSYWGGYLLIPRSVEFWQGQRDRLHDRIKFRRPNKGEVSDERLLHEGEDGWVFERLSP</sequence>
<gene>
    <name evidence="6 7 10" type="primary">PNPO</name>
</gene>
<proteinExistence type="evidence at protein level"/>
<accession>Q1PCB0</accession>
<name>PNPO_BOMMO</name>
<reference evidence="10" key="1">
    <citation type="journal article" date="2009" name="Insect Mol. Biol.">
        <title>Cloning and characterization of a pyridoxine 5'-phosphate oxidase from silkworm, Bombyx mori.</title>
        <authorList>
            <person name="Huang S.H."/>
            <person name="Shi R.J."/>
            <person name="Zhang J.Y."/>
            <person name="Wang Z."/>
            <person name="Huang L.Q."/>
        </authorList>
    </citation>
    <scope>NUCLEOTIDE SEQUENCE [MRNA]</scope>
    <scope>FUNCTION</scope>
    <scope>CATALYTIC ACTIVITY</scope>
    <scope>BIOPHYSICOCHEMICAL PROPERTIES</scope>
    <scope>SUBUNIT</scope>
    <scope>DEVELOPMENTAL STAGE</scope>
    <scope>3D-STRUCTURE MODELING</scope>
    <source>
        <tissue evidence="10">Fat body</tissue>
    </source>
</reference>
<reference key="2">
    <citation type="journal article" date="2008" name="Insect Biochem. Mol. Biol.">
        <title>The genome of a lepidopteran model insect, the silkworm Bombyx mori.</title>
        <authorList>
            <consortium name="International Silkworm Genome Consortium"/>
        </authorList>
    </citation>
    <scope>NUCLEOTIDE SEQUENCE [LARGE SCALE GENOMIC DNA]</scope>
    <source>
        <strain>p50T</strain>
    </source>
</reference>
<reference key="3">
    <citation type="journal article" date="2016" name="Comp. Biochem. Physiol.">
        <title>Effect of exogenous hormones on transcription levels of pyridoxal 5'-phosphate biosynthetic enzymes in the silkworm (Bombyx mori).</title>
        <authorList>
            <person name="Huang S."/>
            <person name="Yang H."/>
            <person name="Yao L."/>
            <person name="Zhang J."/>
            <person name="Huang L."/>
        </authorList>
    </citation>
    <scope>TISSUE SPECIFICITY</scope>
    <scope>DEVELOPMENTAL STAGE</scope>
    <scope>INDUCTION</scope>
</reference>
<reference key="4">
    <citation type="journal article" date="2016" name="Gene">
        <title>Direct and indirect effects of RNA interference against pyridoxal kinase and pyridoxine 5'-phosphate oxidase genes in Bombyx mori.</title>
        <authorList>
            <person name="Huang S."/>
            <person name="Yao L."/>
            <person name="Zhang J."/>
            <person name="Huang L."/>
        </authorList>
    </citation>
    <scope>DEVELOPMENTAL STAGE</scope>
    <scope>DISRUPTION PHENOTYPE</scope>
</reference>
<evidence type="ECO:0000250" key="1">
    <source>
        <dbReference type="UniProtKB" id="P0AFI7"/>
    </source>
</evidence>
<evidence type="ECO:0000250" key="2">
    <source>
        <dbReference type="UniProtKB" id="Q9NVS9"/>
    </source>
</evidence>
<evidence type="ECO:0000269" key="3">
    <source>
    </source>
</evidence>
<evidence type="ECO:0000269" key="4">
    <source>
    </source>
</evidence>
<evidence type="ECO:0000269" key="5">
    <source>
    </source>
</evidence>
<evidence type="ECO:0000303" key="6">
    <source>
    </source>
</evidence>
<evidence type="ECO:0000303" key="7">
    <source>
    </source>
</evidence>
<evidence type="ECO:0000305" key="8"/>
<evidence type="ECO:0000305" key="9">
    <source>
    </source>
</evidence>
<evidence type="ECO:0000312" key="10">
    <source>
        <dbReference type="EMBL" id="ABE28379.1"/>
    </source>
</evidence>
<keyword id="KW-0285">Flavoprotein</keyword>
<keyword id="KW-0288">FMN</keyword>
<keyword id="KW-0560">Oxidoreductase</keyword>
<keyword id="KW-0663">Pyridoxal phosphate</keyword>
<keyword id="KW-0664">Pyridoxine biosynthesis</keyword>
<keyword id="KW-1185">Reference proteome</keyword>